<proteinExistence type="inferred from homology"/>
<comment type="function">
    <text evidence="1">Key component of the proton channel; it plays a direct role in the translocation of protons across the membrane.</text>
</comment>
<comment type="subunit">
    <text evidence="1">F-type ATPases have 2 components, CF(1) - the catalytic core - and CF(0) - the membrane proton channel. CF(1) has five subunits: alpha(3), beta(3), gamma(1), delta(1), epsilon(1). CF(0) has four main subunits: a, b, b' and c.</text>
</comment>
<comment type="subcellular location">
    <subcellularLocation>
        <location evidence="1">Plastid</location>
        <location evidence="1">Chloroplast thylakoid membrane</location>
        <topology evidence="1">Multi-pass membrane protein</topology>
    </subcellularLocation>
</comment>
<comment type="similarity">
    <text evidence="1">Belongs to the ATPase A chain family.</text>
</comment>
<dbReference type="EMBL" id="AJ506156">
    <property type="protein sequence ID" value="CAD56283.1"/>
    <property type="molecule type" value="Genomic_DNA"/>
</dbReference>
<dbReference type="RefSeq" id="NP_904087.1">
    <property type="nucleotide sequence ID" value="NC_005086.1"/>
</dbReference>
<dbReference type="SMR" id="Q70XU8"/>
<dbReference type="STRING" id="13333.Q70XU8"/>
<dbReference type="GeneID" id="2546507"/>
<dbReference type="KEGG" id="atr:2546507"/>
<dbReference type="eggNOG" id="KOG0832">
    <property type="taxonomic scope" value="Eukaryota"/>
</dbReference>
<dbReference type="eggNOG" id="KOG4665">
    <property type="taxonomic scope" value="Eukaryota"/>
</dbReference>
<dbReference type="OrthoDB" id="2303at2759"/>
<dbReference type="Proteomes" id="UP000017836">
    <property type="component" value="Chloroplast"/>
</dbReference>
<dbReference type="GO" id="GO:0009535">
    <property type="term" value="C:chloroplast thylakoid membrane"/>
    <property type="evidence" value="ECO:0007669"/>
    <property type="project" value="UniProtKB-SubCell"/>
</dbReference>
<dbReference type="GO" id="GO:0005886">
    <property type="term" value="C:plasma membrane"/>
    <property type="evidence" value="ECO:0007669"/>
    <property type="project" value="UniProtKB-UniRule"/>
</dbReference>
<dbReference type="GO" id="GO:0045259">
    <property type="term" value="C:proton-transporting ATP synthase complex"/>
    <property type="evidence" value="ECO:0007669"/>
    <property type="project" value="UniProtKB-KW"/>
</dbReference>
<dbReference type="GO" id="GO:0046933">
    <property type="term" value="F:proton-transporting ATP synthase activity, rotational mechanism"/>
    <property type="evidence" value="ECO:0007669"/>
    <property type="project" value="UniProtKB-UniRule"/>
</dbReference>
<dbReference type="CDD" id="cd00310">
    <property type="entry name" value="ATP-synt_Fo_a_6"/>
    <property type="match status" value="1"/>
</dbReference>
<dbReference type="FunFam" id="1.20.120.220:FF:000001">
    <property type="entry name" value="ATP synthase subunit a, chloroplastic"/>
    <property type="match status" value="1"/>
</dbReference>
<dbReference type="Gene3D" id="1.20.120.220">
    <property type="entry name" value="ATP synthase, F0 complex, subunit A"/>
    <property type="match status" value="1"/>
</dbReference>
<dbReference type="HAMAP" id="MF_01393">
    <property type="entry name" value="ATP_synth_a_bact"/>
    <property type="match status" value="1"/>
</dbReference>
<dbReference type="InterPro" id="IPR045082">
    <property type="entry name" value="ATP_syn_F0_a_bact/chloroplast"/>
</dbReference>
<dbReference type="InterPro" id="IPR000568">
    <property type="entry name" value="ATP_synth_F0_asu"/>
</dbReference>
<dbReference type="InterPro" id="IPR023011">
    <property type="entry name" value="ATP_synth_F0_asu_AS"/>
</dbReference>
<dbReference type="InterPro" id="IPR035908">
    <property type="entry name" value="F0_ATP_A_sf"/>
</dbReference>
<dbReference type="NCBIfam" id="TIGR01131">
    <property type="entry name" value="ATP_synt_6_or_A"/>
    <property type="match status" value="1"/>
</dbReference>
<dbReference type="PANTHER" id="PTHR42823">
    <property type="entry name" value="ATP SYNTHASE SUBUNIT A, CHLOROPLASTIC"/>
    <property type="match status" value="1"/>
</dbReference>
<dbReference type="PANTHER" id="PTHR42823:SF3">
    <property type="entry name" value="ATP SYNTHASE SUBUNIT A, CHLOROPLASTIC"/>
    <property type="match status" value="1"/>
</dbReference>
<dbReference type="Pfam" id="PF00119">
    <property type="entry name" value="ATP-synt_A"/>
    <property type="match status" value="1"/>
</dbReference>
<dbReference type="PRINTS" id="PR00123">
    <property type="entry name" value="ATPASEA"/>
</dbReference>
<dbReference type="SUPFAM" id="SSF81336">
    <property type="entry name" value="F1F0 ATP synthase subunit A"/>
    <property type="match status" value="1"/>
</dbReference>
<dbReference type="PROSITE" id="PS00449">
    <property type="entry name" value="ATPASE_A"/>
    <property type="match status" value="1"/>
</dbReference>
<feature type="chain" id="PRO_0000362528" description="ATP synthase subunit a, chloroplastic">
    <location>
        <begin position="1"/>
        <end position="248"/>
    </location>
</feature>
<feature type="transmembrane region" description="Helical" evidence="1">
    <location>
        <begin position="38"/>
        <end position="58"/>
    </location>
</feature>
<feature type="transmembrane region" description="Helical" evidence="1">
    <location>
        <begin position="96"/>
        <end position="116"/>
    </location>
</feature>
<feature type="transmembrane region" description="Helical" evidence="1">
    <location>
        <begin position="135"/>
        <end position="155"/>
    </location>
</feature>
<feature type="transmembrane region" description="Helical" evidence="1">
    <location>
        <begin position="200"/>
        <end position="220"/>
    </location>
</feature>
<feature type="transmembrane region" description="Helical" evidence="1">
    <location>
        <begin position="221"/>
        <end position="241"/>
    </location>
</feature>
<geneLocation type="chloroplast"/>
<sequence>MSVLPCSINTLKGIYDLSGVEVGQHFYWQIGGFQVHAQVLITSWVVIAILLGSATIVVRNPQTIPTDGQNFFEYVLEFIRDLTKTQIGEEEYGPWVPFIGTMFLFIFVSNWSGALLPRKIIELPQGELAAPTNDINTTVALALPTSVAYFYAGISKKGLGYFGKYIQPTPILLPINILEDFTKPLSLSFRLFGNILADELVVVVLVSLVPSLVPIPVMFLGLFTSGIQALIFATLAAAYIGESMEGHH</sequence>
<protein>
    <recommendedName>
        <fullName evidence="1">ATP synthase subunit a, chloroplastic</fullName>
    </recommendedName>
    <alternativeName>
        <fullName evidence="1">ATP synthase F0 sector subunit a</fullName>
    </alternativeName>
    <alternativeName>
        <fullName evidence="1">F-ATPase subunit IV</fullName>
    </alternativeName>
</protein>
<organism>
    <name type="scientific">Amborella trichopoda</name>
    <dbReference type="NCBI Taxonomy" id="13333"/>
    <lineage>
        <taxon>Eukaryota</taxon>
        <taxon>Viridiplantae</taxon>
        <taxon>Streptophyta</taxon>
        <taxon>Embryophyta</taxon>
        <taxon>Tracheophyta</taxon>
        <taxon>Spermatophyta</taxon>
        <taxon>Magnoliopsida</taxon>
        <taxon>Amborellales</taxon>
        <taxon>Amborellaceae</taxon>
        <taxon>Amborella</taxon>
    </lineage>
</organism>
<accession>Q70XU8</accession>
<reference key="1">
    <citation type="journal article" date="2003" name="Mol. Biol. Evol.">
        <title>Analysis of the Amborella trichopoda chloroplast genome sequence suggests that Amborella is not a basal angiosperm.</title>
        <authorList>
            <person name="Goremykin V.V."/>
            <person name="Hirsch-Ernst K.I."/>
            <person name="Wolfl S."/>
            <person name="Hellwig F.H."/>
        </authorList>
    </citation>
    <scope>NUCLEOTIDE SEQUENCE [LARGE SCALE GENOMIC DNA]</scope>
</reference>
<gene>
    <name evidence="1" type="primary">atpI</name>
</gene>
<name>ATPI_AMBTC</name>
<keyword id="KW-0066">ATP synthesis</keyword>
<keyword id="KW-0138">CF(0)</keyword>
<keyword id="KW-0150">Chloroplast</keyword>
<keyword id="KW-0375">Hydrogen ion transport</keyword>
<keyword id="KW-0406">Ion transport</keyword>
<keyword id="KW-0472">Membrane</keyword>
<keyword id="KW-0934">Plastid</keyword>
<keyword id="KW-1185">Reference proteome</keyword>
<keyword id="KW-0793">Thylakoid</keyword>
<keyword id="KW-0812">Transmembrane</keyword>
<keyword id="KW-1133">Transmembrane helix</keyword>
<keyword id="KW-0813">Transport</keyword>
<evidence type="ECO:0000255" key="1">
    <source>
        <dbReference type="HAMAP-Rule" id="MF_01393"/>
    </source>
</evidence>